<name>RISB2_BRUSU</name>
<evidence type="ECO:0000250" key="1"/>
<evidence type="ECO:0000255" key="2">
    <source>
        <dbReference type="HAMAP-Rule" id="MF_00178"/>
    </source>
</evidence>
<comment type="function">
    <text evidence="2">Catalyzes the formation of 6,7-dimethyl-8-ribityllumazine by condensation of 5-amino-6-(D-ribitylamino)uracil with 3,4-dihydroxy-2-butanone 4-phosphate. This is the penultimate step in the biosynthesis of riboflavin.</text>
</comment>
<comment type="catalytic activity">
    <reaction evidence="2">
        <text>(2S)-2-hydroxy-3-oxobutyl phosphate + 5-amino-6-(D-ribitylamino)uracil = 6,7-dimethyl-8-(1-D-ribityl)lumazine + phosphate + 2 H2O + H(+)</text>
        <dbReference type="Rhea" id="RHEA:26152"/>
        <dbReference type="ChEBI" id="CHEBI:15377"/>
        <dbReference type="ChEBI" id="CHEBI:15378"/>
        <dbReference type="ChEBI" id="CHEBI:15934"/>
        <dbReference type="ChEBI" id="CHEBI:43474"/>
        <dbReference type="ChEBI" id="CHEBI:58201"/>
        <dbReference type="ChEBI" id="CHEBI:58830"/>
        <dbReference type="EC" id="2.5.1.78"/>
    </reaction>
</comment>
<comment type="pathway">
    <text evidence="2">Cofactor biosynthesis; riboflavin biosynthesis; riboflavin from 2-hydroxy-3-oxobutyl phosphate and 5-amino-6-(D-ribitylamino)uracil: step 1/2.</text>
</comment>
<comment type="induction">
    <text evidence="1">The two ribH genes may be differentially expressed during the Brucella infection cycle. Brucella would use RibH1 for flavin biosynthesis during the extracellular phase and RibH2 during intracellular growth (By similarity).</text>
</comment>
<comment type="similarity">
    <text evidence="2">Belongs to the DMRL synthase family.</text>
</comment>
<feature type="chain" id="PRO_0000134729" description="6,7-dimethyl-8-ribityllumazine synthase 2">
    <location>
        <begin position="1"/>
        <end position="158"/>
    </location>
</feature>
<feature type="active site" description="Proton donor" evidence="2">
    <location>
        <position position="86"/>
    </location>
</feature>
<feature type="binding site" evidence="2">
    <location>
        <position position="20"/>
    </location>
    <ligand>
        <name>5-amino-6-(D-ribitylamino)uracil</name>
        <dbReference type="ChEBI" id="CHEBI:15934"/>
    </ligand>
</feature>
<feature type="binding site" evidence="2">
    <location>
        <begin position="54"/>
        <end position="56"/>
    </location>
    <ligand>
        <name>5-amino-6-(D-ribitylamino)uracil</name>
        <dbReference type="ChEBI" id="CHEBI:15934"/>
    </ligand>
</feature>
<feature type="binding site" evidence="2">
    <location>
        <begin position="78"/>
        <end position="80"/>
    </location>
    <ligand>
        <name>5-amino-6-(D-ribitylamino)uracil</name>
        <dbReference type="ChEBI" id="CHEBI:15934"/>
    </ligand>
</feature>
<feature type="binding site" evidence="2">
    <location>
        <position position="111"/>
    </location>
    <ligand>
        <name>5-amino-6-(D-ribitylamino)uracil</name>
        <dbReference type="ChEBI" id="CHEBI:15934"/>
    </ligand>
</feature>
<feature type="binding site" evidence="2">
    <location>
        <position position="125"/>
    </location>
    <ligand>
        <name>(2S)-2-hydroxy-3-oxobutyl phosphate</name>
        <dbReference type="ChEBI" id="CHEBI:58830"/>
    </ligand>
</feature>
<sequence>MNQSCPNKTSFKIAFIQARWHADIVDEARKSFVAELAAKTGGSVEVEIFDVPGAYEIPLHAKTLARTGRYAAIVGAAFVIDGGIYRHDFVATAVINGMMQVQLETEVPVLSVVLTPHHFHESKEHHDFFHAHFKVKGVEAAHAALQIVSERSRIAALV</sequence>
<keyword id="KW-0686">Riboflavin biosynthesis</keyword>
<keyword id="KW-0808">Transferase</keyword>
<organism>
    <name type="scientific">Brucella suis biovar 1 (strain 1330)</name>
    <dbReference type="NCBI Taxonomy" id="204722"/>
    <lineage>
        <taxon>Bacteria</taxon>
        <taxon>Pseudomonadati</taxon>
        <taxon>Pseudomonadota</taxon>
        <taxon>Alphaproteobacteria</taxon>
        <taxon>Hyphomicrobiales</taxon>
        <taxon>Brucellaceae</taxon>
        <taxon>Brucella/Ochrobactrum group</taxon>
        <taxon>Brucella</taxon>
    </lineage>
</organism>
<proteinExistence type="inferred from homology"/>
<gene>
    <name evidence="2" type="primary">ribH2</name>
    <name type="synonym">ribH-2</name>
    <name type="ordered locus">BRA0695</name>
    <name type="ordered locus">BS1330_II0688</name>
</gene>
<dbReference type="EC" id="2.5.1.78" evidence="2"/>
<dbReference type="EMBL" id="AE014292">
    <property type="protein sequence ID" value="AAN33881.1"/>
    <property type="molecule type" value="Genomic_DNA"/>
</dbReference>
<dbReference type="EMBL" id="CP002998">
    <property type="protein sequence ID" value="AEM20156.1"/>
    <property type="molecule type" value="Genomic_DNA"/>
</dbReference>
<dbReference type="RefSeq" id="WP_002965946.1">
    <property type="nucleotide sequence ID" value="NZ_KN046805.1"/>
</dbReference>
<dbReference type="SMR" id="P61713"/>
<dbReference type="DrugBank" id="DB04162">
    <property type="generic name" value="5-Nitro-6-ribityl-amino-2,4(1H,3H)-pyrimidinedione"/>
</dbReference>
<dbReference type="KEGG" id="bms:BRA0695"/>
<dbReference type="KEGG" id="bsi:BS1330_II0688"/>
<dbReference type="PATRIC" id="fig|204722.21.peg.2380"/>
<dbReference type="HOGENOM" id="CLU_089358_0_0_5"/>
<dbReference type="PhylomeDB" id="P61713"/>
<dbReference type="UniPathway" id="UPA00275">
    <property type="reaction ID" value="UER00404"/>
</dbReference>
<dbReference type="Proteomes" id="UP000007104">
    <property type="component" value="Chromosome II"/>
</dbReference>
<dbReference type="GO" id="GO:0005829">
    <property type="term" value="C:cytosol"/>
    <property type="evidence" value="ECO:0007669"/>
    <property type="project" value="TreeGrafter"/>
</dbReference>
<dbReference type="GO" id="GO:0009349">
    <property type="term" value="C:riboflavin synthase complex"/>
    <property type="evidence" value="ECO:0007669"/>
    <property type="project" value="InterPro"/>
</dbReference>
<dbReference type="GO" id="GO:0000906">
    <property type="term" value="F:6,7-dimethyl-8-ribityllumazine synthase activity"/>
    <property type="evidence" value="ECO:0007669"/>
    <property type="project" value="UniProtKB-UniRule"/>
</dbReference>
<dbReference type="GO" id="GO:0009231">
    <property type="term" value="P:riboflavin biosynthetic process"/>
    <property type="evidence" value="ECO:0007669"/>
    <property type="project" value="UniProtKB-UniRule"/>
</dbReference>
<dbReference type="CDD" id="cd09208">
    <property type="entry name" value="Lumazine_synthase-II"/>
    <property type="match status" value="1"/>
</dbReference>
<dbReference type="Gene3D" id="3.40.50.960">
    <property type="entry name" value="Lumazine/riboflavin synthase"/>
    <property type="match status" value="1"/>
</dbReference>
<dbReference type="HAMAP" id="MF_00178">
    <property type="entry name" value="Lumazine_synth"/>
    <property type="match status" value="1"/>
</dbReference>
<dbReference type="InterPro" id="IPR034964">
    <property type="entry name" value="LS"/>
</dbReference>
<dbReference type="InterPro" id="IPR002180">
    <property type="entry name" value="LS/RS"/>
</dbReference>
<dbReference type="InterPro" id="IPR036467">
    <property type="entry name" value="LS/RS_sf"/>
</dbReference>
<dbReference type="NCBIfam" id="NF009084">
    <property type="entry name" value="PRK12419.1"/>
    <property type="match status" value="1"/>
</dbReference>
<dbReference type="PANTHER" id="PTHR21058:SF0">
    <property type="entry name" value="6,7-DIMETHYL-8-RIBITYLLUMAZINE SYNTHASE"/>
    <property type="match status" value="1"/>
</dbReference>
<dbReference type="PANTHER" id="PTHR21058">
    <property type="entry name" value="6,7-DIMETHYL-8-RIBITYLLUMAZINE SYNTHASE DMRL SYNTHASE LUMAZINE SYNTHASE"/>
    <property type="match status" value="1"/>
</dbReference>
<dbReference type="Pfam" id="PF00885">
    <property type="entry name" value="DMRL_synthase"/>
    <property type="match status" value="1"/>
</dbReference>
<dbReference type="SUPFAM" id="SSF52121">
    <property type="entry name" value="Lumazine synthase"/>
    <property type="match status" value="1"/>
</dbReference>
<protein>
    <recommendedName>
        <fullName evidence="2">6,7-dimethyl-8-ribityllumazine synthase 2</fullName>
        <shortName evidence="2">DMRL synthase 2</shortName>
        <shortName evidence="2">LS 2</shortName>
        <shortName evidence="2">Lumazine synthase 2</shortName>
        <ecNumber evidence="2">2.5.1.78</ecNumber>
    </recommendedName>
</protein>
<accession>P61713</accession>
<accession>G0KD68</accession>
<accession>Q44668</accession>
<reference key="1">
    <citation type="journal article" date="2002" name="Proc. Natl. Acad. Sci. U.S.A.">
        <title>The Brucella suis genome reveals fundamental similarities between animal and plant pathogens and symbionts.</title>
        <authorList>
            <person name="Paulsen I.T."/>
            <person name="Seshadri R."/>
            <person name="Nelson K.E."/>
            <person name="Eisen J.A."/>
            <person name="Heidelberg J.F."/>
            <person name="Read T.D."/>
            <person name="Dodson R.J."/>
            <person name="Umayam L.A."/>
            <person name="Brinkac L.M."/>
            <person name="Beanan M.J."/>
            <person name="Daugherty S.C."/>
            <person name="DeBoy R.T."/>
            <person name="Durkin A.S."/>
            <person name="Kolonay J.F."/>
            <person name="Madupu R."/>
            <person name="Nelson W.C."/>
            <person name="Ayodeji B."/>
            <person name="Kraul M."/>
            <person name="Shetty J."/>
            <person name="Malek J.A."/>
            <person name="Van Aken S.E."/>
            <person name="Riedmuller S."/>
            <person name="Tettelin H."/>
            <person name="Gill S.R."/>
            <person name="White O."/>
            <person name="Salzberg S.L."/>
            <person name="Hoover D.L."/>
            <person name="Lindler L.E."/>
            <person name="Halling S.M."/>
            <person name="Boyle S.M."/>
            <person name="Fraser C.M."/>
        </authorList>
    </citation>
    <scope>NUCLEOTIDE SEQUENCE [LARGE SCALE GENOMIC DNA]</scope>
    <source>
        <strain>1330</strain>
    </source>
</reference>
<reference key="2">
    <citation type="journal article" date="2011" name="J. Bacteriol.">
        <title>Revised genome sequence of Brucella suis 1330.</title>
        <authorList>
            <person name="Tae H."/>
            <person name="Shallom S."/>
            <person name="Settlage R."/>
            <person name="Preston D."/>
            <person name="Adams L.G."/>
            <person name="Garner H.R."/>
        </authorList>
    </citation>
    <scope>NUCLEOTIDE SEQUENCE [LARGE SCALE GENOMIC DNA]</scope>
    <source>
        <strain>1330</strain>
    </source>
</reference>